<evidence type="ECO:0000269" key="1">
    <source>
    </source>
</evidence>
<evidence type="ECO:0000303" key="2">
    <source>
    </source>
</evidence>
<evidence type="ECO:0000305" key="3"/>
<evidence type="ECO:0000305" key="4">
    <source>
    </source>
</evidence>
<comment type="function">
    <text evidence="1">Bacteriocin with activity against species of Lactobacillus, Lactococcus, Pediococcus, Leuconostoc and against B.subtilis and, to a lesser extent, against B.coagulans, B.cereus and species of Enterococcus, Listeria, Kocuria, Staphylococcus, Corynebacterium, Salmonella, Pseudomonas and Escherichia.</text>
</comment>
<comment type="biophysicochemical properties">
    <phDependence>
        <text evidence="1">Activity is stable between pH 2 and 12 at 25 degrees Celsius.</text>
    </phDependence>
    <temperatureDependence>
        <text evidence="1">Thermostable in a pH-dependent manner. Retains 100% activity after 15 minutes at 121 degrees Celsius at pH 4. Retained activity is lower when incubated at basic pH or pH 2.</text>
    </temperatureDependence>
</comment>
<comment type="subcellular location">
    <subcellularLocation>
        <location evidence="4">Secreted</location>
    </subcellularLocation>
</comment>
<comment type="mass spectrometry" mass="3498.16" method="Electrospray" evidence="1"/>
<comment type="miscellaneous">
    <text evidence="1">Antimicrobial activity is lost upon treatment with alpha-chymotrypsin, trypsin, pepsin and actinase E, but not when treated with proteinase K or endoproteinase Glu-C.</text>
</comment>
<reference evidence="3" key="1">
    <citation type="journal article" date="2015" name="World J. Microbiol. Biotechnol.">
        <title>Purification and characterization of a novel plantaricin, KL-1Y, from Lactobacillus plantarum KL-1.</title>
        <authorList>
            <person name="Rumjuankiat K."/>
            <person name="Perez R.H."/>
            <person name="Pilasombut K."/>
            <person name="Keawsompong S."/>
            <person name="Zendo T."/>
            <person name="Sonomoto K."/>
            <person name="Nitisinprasert S."/>
        </authorList>
    </citation>
    <scope>PROTEIN SEQUENCE</scope>
    <scope>FUNCTION</scope>
    <scope>BIOPHYSICOCHEMICAL PROPERTIES</scope>
    <scope>MASS SPECTROMETRY</scope>
    <source>
        <strain evidence="2">KL-1</strain>
    </source>
</reference>
<name>PLNKY_LACPN</name>
<sequence length="30" mass="3498">GRADYNFGYGLGRGTRKFFNGIGRWVRKTF</sequence>
<protein>
    <recommendedName>
        <fullName evidence="2">Bacteriocin plantaricin KL-1Y</fullName>
    </recommendedName>
</protein>
<feature type="peptide" id="PRO_0000433782" description="Bacteriocin plantaricin KL-1Y" evidence="1">
    <location>
        <begin position="1"/>
        <end position="30"/>
    </location>
</feature>
<accession>C0HJC0</accession>
<keyword id="KW-0044">Antibiotic</keyword>
<keyword id="KW-0929">Antimicrobial</keyword>
<keyword id="KW-0078">Bacteriocin</keyword>
<keyword id="KW-0903">Direct protein sequencing</keyword>
<keyword id="KW-0964">Secreted</keyword>
<dbReference type="GO" id="GO:0005576">
    <property type="term" value="C:extracellular region"/>
    <property type="evidence" value="ECO:0007669"/>
    <property type="project" value="UniProtKB-SubCell"/>
</dbReference>
<dbReference type="GO" id="GO:0042742">
    <property type="term" value="P:defense response to bacterium"/>
    <property type="evidence" value="ECO:0007669"/>
    <property type="project" value="UniProtKB-KW"/>
</dbReference>
<dbReference type="GO" id="GO:0031640">
    <property type="term" value="P:killing of cells of another organism"/>
    <property type="evidence" value="ECO:0007669"/>
    <property type="project" value="UniProtKB-KW"/>
</dbReference>
<organism evidence="2">
    <name type="scientific">Lactiplantibacillus plantarum</name>
    <name type="common">Lactobacillus plantarum</name>
    <dbReference type="NCBI Taxonomy" id="1590"/>
    <lineage>
        <taxon>Bacteria</taxon>
        <taxon>Bacillati</taxon>
        <taxon>Bacillota</taxon>
        <taxon>Bacilli</taxon>
        <taxon>Lactobacillales</taxon>
        <taxon>Lactobacillaceae</taxon>
        <taxon>Lactiplantibacillus</taxon>
    </lineage>
</organism>
<proteinExistence type="evidence at protein level"/>